<comment type="function">
    <text evidence="2 3 5 6">Cleaves a beta-phosphate from the diphosphate groups in PP-InsP5 (diphosphoinositol pentakisphosphate) and [PP]2-InsP4 (bisdiphosphoinositol tetrakisphosphate), suggesting that it may play a role in signal transduction (PubMed:9822604). InsP6 (inositol hexakisphosphate) is not a substrate (By similarity). Acts as a negative regulator of the ERK1/2 pathway (By similarity). Also able to catalyze the hydrolysis of dinucleoside oligophosphates, with diadenosine 5',5'''-P1,P6-hexaphosphate (Ap6A) and diadenosine 5',5'''- P1,P5-pentaphosphate (Ap5A) being the preferred substrates (By similarity). The major reaction products are ADP and p4a from Ap6A and ADP and ATP from Ap5A (By similarity). Also able to hydrolyze 5- phosphoribose 1-diphosphate (By similarity). Acts as a decapping enzyme that can hydrolyze both monomethylated and unmethylated capped RNAs (By similarity). Hydrolyzes monomethylated capped RNA after both the alpha- and beta-phosphates generating m7GMP + ppRNA and m7GDP + pRNA (By similarity). Modulates the stability of a subset of mRNAs implicated in cell motility (By similarity). Divalent cations zinc, magnesium and manganese determine its substrate specificity (By similarity). Exhibits endopolyphosphatase activity in the presence of zinc ions (PubMed:34788624). Exhibits diphosphoinositol polyphosphate phosphohydrolase in the presence of magnesium ions and diadenosine hexaphosphate hydrolase activity in the presence of manganese ions (By similarity). Plays an important role in limiting DNA damage and maintaining cell survival upon oxidative stress via its endopolyphosphatase activity (By similarity).</text>
</comment>
<comment type="catalytic activity">
    <reaction evidence="6">
        <text>diphospho-myo-inositol polyphosphate + H2O = myo-inositol polyphosphate + phosphate.</text>
        <dbReference type="EC" id="3.6.1.52"/>
    </reaction>
</comment>
<comment type="catalytic activity">
    <reaction evidence="6">
        <text>5-diphospho-1D-myo-inositol 1,2,3,4,6-pentakisphosphate + H2O = 1D-myo-inositol hexakisphosphate + phosphate + H(+)</text>
        <dbReference type="Rhea" id="RHEA:22384"/>
        <dbReference type="ChEBI" id="CHEBI:15377"/>
        <dbReference type="ChEBI" id="CHEBI:15378"/>
        <dbReference type="ChEBI" id="CHEBI:43474"/>
        <dbReference type="ChEBI" id="CHEBI:58130"/>
        <dbReference type="ChEBI" id="CHEBI:58628"/>
        <dbReference type="EC" id="3.6.1.52"/>
    </reaction>
</comment>
<comment type="catalytic activity">
    <reaction evidence="6">
        <text>3,5-bis(diphospho)-1D-myo-inositol 1,2,4,6-tetrakisphosphate + H2O = 3-diphospho-1D-myo-inositol 1,2,4,5,6-pentakisphosphate + phosphate + 2 H(+)</text>
        <dbReference type="Rhea" id="RHEA:56312"/>
        <dbReference type="ChEBI" id="CHEBI:15377"/>
        <dbReference type="ChEBI" id="CHEBI:15378"/>
        <dbReference type="ChEBI" id="CHEBI:43474"/>
        <dbReference type="ChEBI" id="CHEBI:140372"/>
        <dbReference type="ChEBI" id="CHEBI:140374"/>
        <dbReference type="EC" id="3.6.1.52"/>
    </reaction>
</comment>
<comment type="catalytic activity">
    <reaction evidence="5">
        <text>[phosphate](n+1) + n H2O = (n+1) phosphate + n H(+)</text>
        <dbReference type="Rhea" id="RHEA:22452"/>
        <dbReference type="Rhea" id="RHEA-COMP:14280"/>
        <dbReference type="ChEBI" id="CHEBI:15377"/>
        <dbReference type="ChEBI" id="CHEBI:15378"/>
        <dbReference type="ChEBI" id="CHEBI:16838"/>
        <dbReference type="ChEBI" id="CHEBI:43474"/>
        <dbReference type="EC" id="3.6.1.10"/>
    </reaction>
</comment>
<comment type="catalytic activity">
    <reaction evidence="2">
        <text>P(1),P(5)-bis(5'-adenosyl) pentaphosphate + H2O = ADP + ATP + 2 H(+)</text>
        <dbReference type="Rhea" id="RHEA:30527"/>
        <dbReference type="ChEBI" id="CHEBI:15377"/>
        <dbReference type="ChEBI" id="CHEBI:15378"/>
        <dbReference type="ChEBI" id="CHEBI:30616"/>
        <dbReference type="ChEBI" id="CHEBI:62041"/>
        <dbReference type="ChEBI" id="CHEBI:456216"/>
        <dbReference type="EC" id="3.6.1.61"/>
    </reaction>
</comment>
<comment type="catalytic activity">
    <reaction evidence="2">
        <text>P(1),P(6)-bis(5'-adenosyl) hexaphosphate + H2O = 2 ATP + 2 H(+)</text>
        <dbReference type="Rhea" id="RHEA:32043"/>
        <dbReference type="ChEBI" id="CHEBI:15377"/>
        <dbReference type="ChEBI" id="CHEBI:15378"/>
        <dbReference type="ChEBI" id="CHEBI:30616"/>
        <dbReference type="ChEBI" id="CHEBI:63740"/>
        <dbReference type="EC" id="3.6.1.61"/>
    </reaction>
</comment>
<comment type="catalytic activity">
    <reaction evidence="2">
        <text>P(1),P(4)-bis(5'-adenosyl) tetraphosphate + H2O = AMP + ATP + 2 H(+)</text>
        <dbReference type="Rhea" id="RHEA:32039"/>
        <dbReference type="ChEBI" id="CHEBI:15377"/>
        <dbReference type="ChEBI" id="CHEBI:15378"/>
        <dbReference type="ChEBI" id="CHEBI:30616"/>
        <dbReference type="ChEBI" id="CHEBI:58141"/>
        <dbReference type="ChEBI" id="CHEBI:456215"/>
        <dbReference type="EC" id="3.6.1.61"/>
    </reaction>
</comment>
<comment type="catalytic activity">
    <reaction evidence="3">
        <text>a 5'-end (N(7)-methyl 5'-triphosphoguanosine)-ribonucleoside in mRNA + H2O = N(7)-methyl-GMP + a 5'-end diphospho-ribonucleoside in mRNA + 2 H(+)</text>
        <dbReference type="Rhea" id="RHEA:65388"/>
        <dbReference type="Rhea" id="RHEA-COMP:17165"/>
        <dbReference type="Rhea" id="RHEA-COMP:17167"/>
        <dbReference type="ChEBI" id="CHEBI:15377"/>
        <dbReference type="ChEBI" id="CHEBI:15378"/>
        <dbReference type="ChEBI" id="CHEBI:58285"/>
        <dbReference type="ChEBI" id="CHEBI:156461"/>
        <dbReference type="ChEBI" id="CHEBI:167616"/>
        <dbReference type="EC" id="3.6.1.59"/>
    </reaction>
</comment>
<comment type="catalytic activity">
    <reaction evidence="3">
        <text>a 5'-end (N(7)-methyl 5'-triphosphoguanosine)-ribonucleoside in mRNA + H2O = N(7)-methyl-GDP + a 5'-end phospho-ribonucleoside in mRNA + 2 H(+)</text>
        <dbReference type="Rhea" id="RHEA:67484"/>
        <dbReference type="Rhea" id="RHEA-COMP:15692"/>
        <dbReference type="Rhea" id="RHEA-COMP:17167"/>
        <dbReference type="ChEBI" id="CHEBI:15377"/>
        <dbReference type="ChEBI" id="CHEBI:15378"/>
        <dbReference type="ChEBI" id="CHEBI:63714"/>
        <dbReference type="ChEBI" id="CHEBI:138282"/>
        <dbReference type="ChEBI" id="CHEBI:156461"/>
        <dbReference type="EC" id="3.6.1.62"/>
    </reaction>
</comment>
<comment type="cofactor">
    <cofactor evidence="2">
        <name>Mg(2+)</name>
        <dbReference type="ChEBI" id="CHEBI:18420"/>
    </cofactor>
    <cofactor evidence="2">
        <name>Mn(2+)</name>
        <dbReference type="ChEBI" id="CHEBI:29035"/>
    </cofactor>
    <cofactor evidence="5">
        <name>Zn(2+)</name>
        <dbReference type="ChEBI" id="CHEBI:29105"/>
    </cofactor>
    <text evidence="2">Binds 3 Mg(2+) ions per subunit.</text>
</comment>
<comment type="activity regulation">
    <text evidence="6">Diphosphoinositol polyphosphate phosphohydrolase is inhibited by fluoride and InsP6.</text>
</comment>
<comment type="biophysicochemical properties">
    <kinetics>
        <KM evidence="6">340 nM for PP-InsP5</KM>
        <KM evidence="6">34 nM for [PP]2-InsP4</KM>
    </kinetics>
</comment>
<comment type="subunit">
    <text evidence="6">Monomer.</text>
</comment>
<comment type="subcellular location">
    <subcellularLocation>
        <location evidence="2">Cytoplasm</location>
    </subcellularLocation>
    <subcellularLocation>
        <location evidence="2">Nucleus</location>
    </subcellularLocation>
</comment>
<comment type="similarity">
    <text evidence="7">Belongs to the Nudix hydrolase family. DIPP subfamily.</text>
</comment>
<protein>
    <recommendedName>
        <fullName evidence="7">Diphosphoinositol polyphosphate phosphohydrolase 1</fullName>
        <shortName>DIPP-1</shortName>
        <ecNumber evidence="6">3.6.1.52</ecNumber>
    </recommendedName>
    <alternativeName>
        <fullName>Diadenosine hexaphosphate hydrolase</fullName>
        <shortName>Ap6A hydrolase</shortName>
        <ecNumber evidence="2">3.6.1.61</ecNumber>
    </alternativeName>
    <alternativeName>
        <fullName>Endopolyphosphatase</fullName>
        <ecNumber evidence="5">3.6.1.10</ecNumber>
    </alternativeName>
    <alternativeName>
        <fullName>Nucleoside diphosphate-linked moiety X motif 3</fullName>
        <shortName>Nudix motif 3</shortName>
    </alternativeName>
    <alternativeName>
        <fullName>m7GpppN-mRNA hydrolase</fullName>
        <ecNumber evidence="3">3.6.1.62</ecNumber>
    </alternativeName>
    <alternativeName>
        <fullName>m7GpppX diphosphatase</fullName>
        <ecNumber evidence="3">3.6.1.59</ecNumber>
    </alternativeName>
</protein>
<reference key="1">
    <citation type="journal article" date="2004" name="Genome Res.">
        <title>The status, quality, and expansion of the NIH full-length cDNA project: the Mammalian Gene Collection (MGC).</title>
        <authorList>
            <consortium name="The MGC Project Team"/>
        </authorList>
    </citation>
    <scope>NUCLEOTIDE SEQUENCE [LARGE SCALE MRNA]</scope>
    <source>
        <tissue>Brain</tissue>
    </source>
</reference>
<reference key="2">
    <citation type="journal article" date="1998" name="EMBO J.">
        <title>A novel context for the 'MutT' module, a guardian of cell integrity, in a diphosphoinositol polyphosphate phosphohydrolase.</title>
        <authorList>
            <person name="Safrany S.T."/>
            <person name="Caffrey J.J."/>
            <person name="Yang X."/>
            <person name="Bembenek M.E."/>
            <person name="Moyer M.B."/>
            <person name="Burkhart W.A."/>
            <person name="Shears S.B."/>
        </authorList>
    </citation>
    <scope>PROTEIN SEQUENCE OF 3-17; 20-115 AND 117-121</scope>
    <scope>FUNCTION</scope>
    <scope>CATALYTIC ACTIVITY</scope>
    <scope>COFACTOR</scope>
    <scope>ACTIVITY REGULATION</scope>
    <scope>SUBUNIT</scope>
    <scope>BIOPHYSICOCHEMICAL PROPERTIES</scope>
</reference>
<reference key="3">
    <citation type="journal article" date="2021" name="Cell Rep.">
        <title>Polyphosphate degradation by Nudt3-Zn2+ mediates oxidative stress response.</title>
        <authorList>
            <person name="Samper-Martin B."/>
            <person name="Sarrias A."/>
            <person name="Lazaro B."/>
            <person name="Perez-Montero M."/>
            <person name="Rodriguez-Rodriguez R."/>
            <person name="Ribeiro M.P.C."/>
            <person name="Banon A."/>
            <person name="Wolfgeher D."/>
            <person name="Jessen H.J."/>
            <person name="Alsina B."/>
            <person name="Clotet J."/>
            <person name="Kron S.J."/>
            <person name="Saiardi A."/>
            <person name="Jimenez J."/>
            <person name="Bru S."/>
        </authorList>
    </citation>
    <scope>FUNCTION</scope>
    <scope>CATALYTIC ACTIVITY</scope>
    <scope>COFACTOR</scope>
</reference>
<gene>
    <name evidence="8" type="primary">Nudt3</name>
    <name type="synonym">Dipp</name>
    <name type="synonym">Dipp1</name>
</gene>
<sequence>MMKLKSNQTRTYDGDGYKKRAACLCFRSESEEEVLLVSSSRHPDRWIVPGGGMEPEEEPSVAAVREVCEEAGVKGTLGRLVGIFENQERKHRTYVYVLIVTEVLEDWEDSVNIGRKREWFKIEEAVKVLQYHKPVQASYFEALRQGYSANNGTPVLPTTYSSSMSGIR</sequence>
<proteinExistence type="evidence at protein level"/>
<organism>
    <name type="scientific">Rattus norvegicus</name>
    <name type="common">Rat</name>
    <dbReference type="NCBI Taxonomy" id="10116"/>
    <lineage>
        <taxon>Eukaryota</taxon>
        <taxon>Metazoa</taxon>
        <taxon>Chordata</taxon>
        <taxon>Craniata</taxon>
        <taxon>Vertebrata</taxon>
        <taxon>Euteleostomi</taxon>
        <taxon>Mammalia</taxon>
        <taxon>Eutheria</taxon>
        <taxon>Euarchontoglires</taxon>
        <taxon>Glires</taxon>
        <taxon>Rodentia</taxon>
        <taxon>Myomorpha</taxon>
        <taxon>Muroidea</taxon>
        <taxon>Muridae</taxon>
        <taxon>Murinae</taxon>
        <taxon>Rattus</taxon>
    </lineage>
</organism>
<feature type="chain" id="PRO_0000057057" description="Diphosphoinositol polyphosphate phosphohydrolase 1">
    <location>
        <begin position="1"/>
        <end position="168"/>
    </location>
</feature>
<feature type="domain" description="Nudix hydrolase" evidence="4">
    <location>
        <begin position="17"/>
        <end position="142"/>
    </location>
</feature>
<feature type="short sequence motif" description="Nudix box">
    <location>
        <begin position="51"/>
        <end position="72"/>
    </location>
</feature>
<feature type="active site" description="Proton acceptor" evidence="1">
    <location>
        <position position="69"/>
    </location>
</feature>
<feature type="binding site" evidence="2">
    <location>
        <position position="10"/>
    </location>
    <ligand>
        <name>substrate</name>
    </ligand>
</feature>
<feature type="binding site" evidence="2">
    <location>
        <begin position="18"/>
        <end position="20"/>
    </location>
    <ligand>
        <name>substrate</name>
    </ligand>
</feature>
<feature type="binding site" evidence="2">
    <location>
        <begin position="39"/>
        <end position="41"/>
    </location>
    <ligand>
        <name>substrate</name>
    </ligand>
</feature>
<feature type="binding site" evidence="2">
    <location>
        <position position="50"/>
    </location>
    <ligand>
        <name>Mg(2+)</name>
        <dbReference type="ChEBI" id="CHEBI:18420"/>
        <label>1</label>
    </ligand>
</feature>
<feature type="binding site" evidence="2">
    <location>
        <position position="66"/>
    </location>
    <ligand>
        <name>Mg(2+)</name>
        <dbReference type="ChEBI" id="CHEBI:18420"/>
        <label>2</label>
    </ligand>
</feature>
<feature type="binding site" evidence="2">
    <location>
        <position position="66"/>
    </location>
    <ligand>
        <name>Mg(2+)</name>
        <dbReference type="ChEBI" id="CHEBI:18420"/>
        <label>3</label>
    </ligand>
</feature>
<feature type="binding site" evidence="2">
    <location>
        <position position="70"/>
    </location>
    <ligand>
        <name>Mg(2+)</name>
        <dbReference type="ChEBI" id="CHEBI:18420"/>
        <label>1</label>
    </ligand>
</feature>
<feature type="binding site" evidence="2">
    <location>
        <begin position="89"/>
        <end position="91"/>
    </location>
    <ligand>
        <name>substrate</name>
    </ligand>
</feature>
<feature type="binding site" evidence="2">
    <location>
        <position position="115"/>
    </location>
    <ligand>
        <name>substrate</name>
    </ligand>
</feature>
<feature type="binding site" evidence="2">
    <location>
        <position position="133"/>
    </location>
    <ligand>
        <name>substrate</name>
    </ligand>
</feature>
<feature type="modified residue" description="N-acetylmethionine" evidence="2">
    <location>
        <position position="1"/>
    </location>
</feature>
<dbReference type="EC" id="3.6.1.52" evidence="6"/>
<dbReference type="EC" id="3.6.1.61" evidence="2"/>
<dbReference type="EC" id="3.6.1.10" evidence="5"/>
<dbReference type="EC" id="3.6.1.62" evidence="3"/>
<dbReference type="EC" id="3.6.1.59" evidence="3"/>
<dbReference type="EMBL" id="BC093618">
    <property type="protein sequence ID" value="AAH93618.1"/>
    <property type="molecule type" value="mRNA"/>
</dbReference>
<dbReference type="RefSeq" id="NP_001019414.1">
    <property type="nucleotide sequence ID" value="NM_001024243.2"/>
</dbReference>
<dbReference type="SMR" id="Q566C7"/>
<dbReference type="FunCoup" id="Q566C7">
    <property type="interactions" value="3202"/>
</dbReference>
<dbReference type="STRING" id="10116.ENSRNOP00000074608"/>
<dbReference type="PhosphoSitePlus" id="Q566C7"/>
<dbReference type="jPOST" id="Q566C7"/>
<dbReference type="PaxDb" id="10116-ENSRNOP00000000581"/>
<dbReference type="Ensembl" id="ENSRNOT00000083169.2">
    <property type="protein sequence ID" value="ENSRNOP00000074608.1"/>
    <property type="gene ID" value="ENSRNOG00000061176.2"/>
</dbReference>
<dbReference type="GeneID" id="294292"/>
<dbReference type="KEGG" id="rno:294292"/>
<dbReference type="UCSC" id="RGD:1310183">
    <property type="organism name" value="rat"/>
</dbReference>
<dbReference type="AGR" id="RGD:1310183"/>
<dbReference type="CTD" id="11165"/>
<dbReference type="RGD" id="1310183">
    <property type="gene designation" value="Nudt3"/>
</dbReference>
<dbReference type="eggNOG" id="KOG2839">
    <property type="taxonomic scope" value="Eukaryota"/>
</dbReference>
<dbReference type="GeneTree" id="ENSGT00940000157882"/>
<dbReference type="HOGENOM" id="CLU_037162_1_0_1"/>
<dbReference type="InParanoid" id="Q566C7"/>
<dbReference type="OMA" id="WHEDKLN"/>
<dbReference type="OrthoDB" id="2011998at2759"/>
<dbReference type="PhylomeDB" id="Q566C7"/>
<dbReference type="TreeFam" id="TF106349"/>
<dbReference type="Reactome" id="R-RNO-1855167">
    <property type="pathway name" value="Synthesis of pyrophosphates in the cytosol"/>
</dbReference>
<dbReference type="PRO" id="PR:Q566C7"/>
<dbReference type="Proteomes" id="UP000002494">
    <property type="component" value="Chromosome 20"/>
</dbReference>
<dbReference type="Bgee" id="ENSRNOG00000061176">
    <property type="expression patterns" value="Expressed in frontal cortex and 19 other cell types or tissues"/>
</dbReference>
<dbReference type="GO" id="GO:0005737">
    <property type="term" value="C:cytoplasm"/>
    <property type="evidence" value="ECO:0000250"/>
    <property type="project" value="UniProtKB"/>
</dbReference>
<dbReference type="GO" id="GO:0005829">
    <property type="term" value="C:cytosol"/>
    <property type="evidence" value="ECO:0007669"/>
    <property type="project" value="Ensembl"/>
</dbReference>
<dbReference type="GO" id="GO:0098978">
    <property type="term" value="C:glutamatergic synapse"/>
    <property type="evidence" value="ECO:0000266"/>
    <property type="project" value="RGD"/>
</dbReference>
<dbReference type="GO" id="GO:0005634">
    <property type="term" value="C:nucleus"/>
    <property type="evidence" value="ECO:0000250"/>
    <property type="project" value="UniProtKB"/>
</dbReference>
<dbReference type="GO" id="GO:0045202">
    <property type="term" value="C:synapse"/>
    <property type="evidence" value="ECO:0000266"/>
    <property type="project" value="RGD"/>
</dbReference>
<dbReference type="GO" id="GO:0140932">
    <property type="term" value="F:5'-(N(7)-methyl 5'-triphosphoguanosine)-[mRNA] diphosphatase activity"/>
    <property type="evidence" value="ECO:0000250"/>
    <property type="project" value="UniProtKB"/>
</dbReference>
<dbReference type="GO" id="GO:0140933">
    <property type="term" value="F:5'-(N(7)-methylguanosine 5'-triphospho)-[mRNA] hydrolase activity"/>
    <property type="evidence" value="ECO:0000250"/>
    <property type="project" value="UniProtKB"/>
</dbReference>
<dbReference type="GO" id="GO:0034431">
    <property type="term" value="F:bis(5'-adenosyl)-hexaphosphatase activity"/>
    <property type="evidence" value="ECO:0000318"/>
    <property type="project" value="GO_Central"/>
</dbReference>
<dbReference type="GO" id="GO:0034432">
    <property type="term" value="F:bis(5'-adenosyl)-pentaphosphatase activity"/>
    <property type="evidence" value="ECO:0000318"/>
    <property type="project" value="GO_Central"/>
</dbReference>
<dbReference type="GO" id="GO:0008486">
    <property type="term" value="F:diphosphoinositol-polyphosphate diphosphatase activity"/>
    <property type="evidence" value="ECO:0000250"/>
    <property type="project" value="UniProtKB"/>
</dbReference>
<dbReference type="GO" id="GO:0000298">
    <property type="term" value="F:endopolyphosphatase activity"/>
    <property type="evidence" value="ECO:0000314"/>
    <property type="project" value="UniProtKB"/>
</dbReference>
<dbReference type="GO" id="GO:0052842">
    <property type="term" value="F:inositol diphosphate pentakisphosphate diphosphatase activity"/>
    <property type="evidence" value="ECO:0000250"/>
    <property type="project" value="UniProtKB"/>
</dbReference>
<dbReference type="GO" id="GO:0052840">
    <property type="term" value="F:inositol diphosphate tetrakisphosphate diphosphatase activity"/>
    <property type="evidence" value="ECO:0000250"/>
    <property type="project" value="UniProtKB"/>
</dbReference>
<dbReference type="GO" id="GO:0052848">
    <property type="term" value="F:inositol-3,5-bisdiphosphate-2,3,4,6-tetrakisphosphate 5-diphosphatase activity"/>
    <property type="evidence" value="ECO:0007669"/>
    <property type="project" value="RHEA"/>
</dbReference>
<dbReference type="GO" id="GO:0052845">
    <property type="term" value="F:inositol-5-diphosphate-1,2,3,4,6-pentakisphosphate diphosphatase activity"/>
    <property type="evidence" value="ECO:0007669"/>
    <property type="project" value="RHEA"/>
</dbReference>
<dbReference type="GO" id="GO:0000287">
    <property type="term" value="F:magnesium ion binding"/>
    <property type="evidence" value="ECO:0000250"/>
    <property type="project" value="UniProtKB"/>
</dbReference>
<dbReference type="GO" id="GO:0030145">
    <property type="term" value="F:manganese ion binding"/>
    <property type="evidence" value="ECO:0000250"/>
    <property type="project" value="UniProtKB"/>
</dbReference>
<dbReference type="GO" id="GO:0008270">
    <property type="term" value="F:zinc ion binding"/>
    <property type="evidence" value="ECO:0000250"/>
    <property type="project" value="UniProtKB"/>
</dbReference>
<dbReference type="GO" id="GO:1901911">
    <property type="term" value="P:adenosine 5'-(hexahydrogen pentaphosphate) catabolic process"/>
    <property type="evidence" value="ECO:0000318"/>
    <property type="project" value="GO_Central"/>
</dbReference>
<dbReference type="GO" id="GO:1901909">
    <property type="term" value="P:diadenosine hexaphosphate catabolic process"/>
    <property type="evidence" value="ECO:0000266"/>
    <property type="project" value="RGD"/>
</dbReference>
<dbReference type="GO" id="GO:1901907">
    <property type="term" value="P:diadenosine pentaphosphate catabolic process"/>
    <property type="evidence" value="ECO:0000318"/>
    <property type="project" value="GO_Central"/>
</dbReference>
<dbReference type="GO" id="GO:0071544">
    <property type="term" value="P:diphosphoinositol polyphosphate catabolic process"/>
    <property type="evidence" value="ECO:0000250"/>
    <property type="project" value="UniProtKB"/>
</dbReference>
<dbReference type="GO" id="GO:0071543">
    <property type="term" value="P:diphosphoinositol polyphosphate metabolic process"/>
    <property type="evidence" value="ECO:0000318"/>
    <property type="project" value="GO_Central"/>
</dbReference>
<dbReference type="GO" id="GO:0110154">
    <property type="term" value="P:RNA decapping"/>
    <property type="evidence" value="ECO:0000250"/>
    <property type="project" value="UniProtKB"/>
</dbReference>
<dbReference type="CDD" id="cd04666">
    <property type="entry name" value="NUDIX_DIPP2_like_Nudt4"/>
    <property type="match status" value="1"/>
</dbReference>
<dbReference type="FunFam" id="3.90.79.10:FF:000002">
    <property type="entry name" value="diphosphoinositol polyphosphate phosphohydrolase 1"/>
    <property type="match status" value="1"/>
</dbReference>
<dbReference type="Gene3D" id="3.90.79.10">
    <property type="entry name" value="Nucleoside Triphosphate Pyrophosphohydrolase"/>
    <property type="match status" value="1"/>
</dbReference>
<dbReference type="InterPro" id="IPR047198">
    <property type="entry name" value="DDP-like_NUDIX"/>
</dbReference>
<dbReference type="InterPro" id="IPR015797">
    <property type="entry name" value="NUDIX_hydrolase-like_dom_sf"/>
</dbReference>
<dbReference type="InterPro" id="IPR020084">
    <property type="entry name" value="NUDIX_hydrolase_CS"/>
</dbReference>
<dbReference type="InterPro" id="IPR000086">
    <property type="entry name" value="NUDIX_hydrolase_dom"/>
</dbReference>
<dbReference type="PANTHER" id="PTHR12629">
    <property type="entry name" value="DIPHOSPHOINOSITOL POLYPHOSPHATE PHOSPHOHYDROLASE"/>
    <property type="match status" value="1"/>
</dbReference>
<dbReference type="PANTHER" id="PTHR12629:SF5">
    <property type="entry name" value="DIPHOSPHOINOSITOL POLYPHOSPHATE PHOSPHOHYDROLASE 1"/>
    <property type="match status" value="1"/>
</dbReference>
<dbReference type="Pfam" id="PF00293">
    <property type="entry name" value="NUDIX"/>
    <property type="match status" value="1"/>
</dbReference>
<dbReference type="SUPFAM" id="SSF55811">
    <property type="entry name" value="Nudix"/>
    <property type="match status" value="1"/>
</dbReference>
<dbReference type="PROSITE" id="PS51462">
    <property type="entry name" value="NUDIX"/>
    <property type="match status" value="1"/>
</dbReference>
<dbReference type="PROSITE" id="PS00893">
    <property type="entry name" value="NUDIX_BOX"/>
    <property type="match status" value="1"/>
</dbReference>
<name>NUDT3_RAT</name>
<keyword id="KW-0007">Acetylation</keyword>
<keyword id="KW-0963">Cytoplasm</keyword>
<keyword id="KW-0903">Direct protein sequencing</keyword>
<keyword id="KW-0378">Hydrolase</keyword>
<keyword id="KW-0460">Magnesium</keyword>
<keyword id="KW-0479">Metal-binding</keyword>
<keyword id="KW-0539">Nucleus</keyword>
<keyword id="KW-1185">Reference proteome</keyword>
<accession>Q566C7</accession>
<evidence type="ECO:0000250" key="1"/>
<evidence type="ECO:0000250" key="2">
    <source>
        <dbReference type="UniProtKB" id="O95989"/>
    </source>
</evidence>
<evidence type="ECO:0000250" key="3">
    <source>
        <dbReference type="UniProtKB" id="Q9JI46"/>
    </source>
</evidence>
<evidence type="ECO:0000255" key="4">
    <source>
        <dbReference type="PROSITE-ProRule" id="PRU00794"/>
    </source>
</evidence>
<evidence type="ECO:0000269" key="5">
    <source>
    </source>
</evidence>
<evidence type="ECO:0000269" key="6">
    <source>
    </source>
</evidence>
<evidence type="ECO:0000305" key="7"/>
<evidence type="ECO:0000312" key="8">
    <source>
        <dbReference type="RGD" id="1310183"/>
    </source>
</evidence>